<geneLocation type="mitochondrion"/>
<proteinExistence type="inferred from homology"/>
<name>NU4LM_ASPNG</name>
<sequence length="89" mass="9907">MNFSIFLFLIGILGFVLNRKNIILMLISIEIMLLSITFLILISSLSFDDILGQTFAVYIITVAGAESAIGLGILVAYYRLRGSISIQYR</sequence>
<comment type="function">
    <text evidence="1">Core subunit of the mitochondrial membrane respiratory chain NADH dehydrogenase (Complex I) that is believed to belong to the minimal assembly required for catalysis. Complex I functions in the transfer of electrons from NADH to the respiratory chain. The immediate electron acceptor for the enzyme is believed to be ubiquinone (By similarity).</text>
</comment>
<comment type="catalytic activity">
    <reaction>
        <text>a ubiquinone + NADH + 5 H(+)(in) = a ubiquinol + NAD(+) + 4 H(+)(out)</text>
        <dbReference type="Rhea" id="RHEA:29091"/>
        <dbReference type="Rhea" id="RHEA-COMP:9565"/>
        <dbReference type="Rhea" id="RHEA-COMP:9566"/>
        <dbReference type="ChEBI" id="CHEBI:15378"/>
        <dbReference type="ChEBI" id="CHEBI:16389"/>
        <dbReference type="ChEBI" id="CHEBI:17976"/>
        <dbReference type="ChEBI" id="CHEBI:57540"/>
        <dbReference type="ChEBI" id="CHEBI:57945"/>
        <dbReference type="EC" id="7.1.1.2"/>
    </reaction>
</comment>
<comment type="subcellular location">
    <subcellularLocation>
        <location evidence="1">Mitochondrion membrane</location>
        <topology evidence="1">Multi-pass membrane protein</topology>
    </subcellularLocation>
</comment>
<comment type="similarity">
    <text evidence="3">Belongs to the complex I subunit 4L family.</text>
</comment>
<accession>Q5YF91</accession>
<feature type="chain" id="PRO_0000118390" description="NADH-ubiquinone oxidoreductase chain 4L">
    <location>
        <begin position="1"/>
        <end position="89"/>
    </location>
</feature>
<feature type="transmembrane region" description="Helical" evidence="2">
    <location>
        <begin position="1"/>
        <end position="21"/>
    </location>
</feature>
<feature type="transmembrane region" description="Helical" evidence="2">
    <location>
        <begin position="22"/>
        <end position="42"/>
    </location>
</feature>
<feature type="transmembrane region" description="Helical" evidence="2">
    <location>
        <begin position="55"/>
        <end position="75"/>
    </location>
</feature>
<dbReference type="EC" id="7.1.1.2"/>
<dbReference type="EMBL" id="AY525764">
    <property type="protein sequence ID" value="AAV28559.1"/>
    <property type="molecule type" value="Genomic_DNA"/>
</dbReference>
<dbReference type="SMR" id="Q5YF91"/>
<dbReference type="GO" id="GO:0031966">
    <property type="term" value="C:mitochondrial membrane"/>
    <property type="evidence" value="ECO:0007669"/>
    <property type="project" value="UniProtKB-SubCell"/>
</dbReference>
<dbReference type="GO" id="GO:0030964">
    <property type="term" value="C:NADH dehydrogenase complex"/>
    <property type="evidence" value="ECO:0007669"/>
    <property type="project" value="TreeGrafter"/>
</dbReference>
<dbReference type="GO" id="GO:0008137">
    <property type="term" value="F:NADH dehydrogenase (ubiquinone) activity"/>
    <property type="evidence" value="ECO:0007669"/>
    <property type="project" value="UniProtKB-EC"/>
</dbReference>
<dbReference type="GO" id="GO:0042773">
    <property type="term" value="P:ATP synthesis coupled electron transport"/>
    <property type="evidence" value="ECO:0007669"/>
    <property type="project" value="InterPro"/>
</dbReference>
<dbReference type="FunFam" id="1.10.287.3510:FF:000004">
    <property type="entry name" value="NADH-ubiquinone oxidoreductase chain 4L"/>
    <property type="match status" value="1"/>
</dbReference>
<dbReference type="Gene3D" id="1.10.287.3510">
    <property type="match status" value="1"/>
</dbReference>
<dbReference type="InterPro" id="IPR001133">
    <property type="entry name" value="NADH_UbQ_OxRdtase_chain4L/K"/>
</dbReference>
<dbReference type="InterPro" id="IPR039428">
    <property type="entry name" value="NUOK/Mnh_C1-like"/>
</dbReference>
<dbReference type="NCBIfam" id="NF004320">
    <property type="entry name" value="PRK05715.1-2"/>
    <property type="match status" value="1"/>
</dbReference>
<dbReference type="PANTHER" id="PTHR11434:SF16">
    <property type="entry name" value="NADH-UBIQUINONE OXIDOREDUCTASE CHAIN 4L"/>
    <property type="match status" value="1"/>
</dbReference>
<dbReference type="PANTHER" id="PTHR11434">
    <property type="entry name" value="NADH-UBIQUINONE OXIDOREDUCTASE SUBUNIT ND4L"/>
    <property type="match status" value="1"/>
</dbReference>
<dbReference type="Pfam" id="PF00420">
    <property type="entry name" value="Oxidored_q2"/>
    <property type="match status" value="1"/>
</dbReference>
<organism>
    <name type="scientific">Aspergillus niger</name>
    <dbReference type="NCBI Taxonomy" id="5061"/>
    <lineage>
        <taxon>Eukaryota</taxon>
        <taxon>Fungi</taxon>
        <taxon>Dikarya</taxon>
        <taxon>Ascomycota</taxon>
        <taxon>Pezizomycotina</taxon>
        <taxon>Eurotiomycetes</taxon>
        <taxon>Eurotiomycetidae</taxon>
        <taxon>Eurotiales</taxon>
        <taxon>Aspergillaceae</taxon>
        <taxon>Aspergillus</taxon>
        <taxon>Aspergillus subgen. Circumdati</taxon>
    </lineage>
</organism>
<evidence type="ECO:0000250" key="1"/>
<evidence type="ECO:0000255" key="2"/>
<evidence type="ECO:0000305" key="3"/>
<reference key="1">
    <citation type="journal article" date="2004" name="FEMS Microbiol. Lett.">
        <title>Mitochondrial DNA organisation of the mtDNA type 2b of Aspergillus tubingensis compared to the Aspergillus niger mtDNA type 1a.</title>
        <authorList>
            <person name="Juhasz A."/>
            <person name="Laday M."/>
            <person name="Gacser A."/>
            <person name="Kucsera J."/>
            <person name="Pfeiffer I."/>
            <person name="Kevei F."/>
            <person name="Hamari Z."/>
        </authorList>
    </citation>
    <scope>NUCLEOTIDE SEQUENCE [GENOMIC DNA]</scope>
    <source>
        <strain>N909</strain>
    </source>
</reference>
<keyword id="KW-0249">Electron transport</keyword>
<keyword id="KW-0472">Membrane</keyword>
<keyword id="KW-0496">Mitochondrion</keyword>
<keyword id="KW-0520">NAD</keyword>
<keyword id="KW-0679">Respiratory chain</keyword>
<keyword id="KW-1278">Translocase</keyword>
<keyword id="KW-0812">Transmembrane</keyword>
<keyword id="KW-1133">Transmembrane helix</keyword>
<keyword id="KW-0813">Transport</keyword>
<keyword id="KW-0830">Ubiquinone</keyword>
<protein>
    <recommendedName>
        <fullName>NADH-ubiquinone oxidoreductase chain 4L</fullName>
        <ecNumber>7.1.1.2</ecNumber>
    </recommendedName>
    <alternativeName>
        <fullName>NADH dehydrogenase subunit 4L</fullName>
    </alternativeName>
</protein>
<gene>
    <name type="primary">nd4L</name>
    <name type="synonym">nad4L</name>
</gene>